<keyword id="KW-0025">Alternative splicing</keyword>
<keyword id="KW-0963">Cytoplasm</keyword>
<keyword id="KW-1267">Proteomics identification</keyword>
<keyword id="KW-1185">Reference proteome</keyword>
<comment type="function">
    <text evidence="1 2 3 4 5">Sialic acids are components of carbohydrate chains of glycoconjugates and are involved in cell-cell recognition and cell-pathogen interactions. That protein has no CMP-N-acetylneuraminate monooxygenase activity and is not able to convert CMP-N-acetylneuraminic acid (CMP-Neu5Ac) into its hydroxylated derivative CMP-N-glycolylneuraminic acid (CMP-Neu5Gc), a sialic acid abundantly expressed at the surface of many cells in vertebrates (PubMed:9624188). However, it may play a role in Wnt signaling (PubMed:19890979).</text>
</comment>
<comment type="subcellular location">
    <subcellularLocation>
        <location evidence="1">Cytoplasm</location>
    </subcellularLocation>
    <text evidence="1">May localize to membranes, nucleus and cytoskeleton.</text>
</comment>
<comment type="alternative products">
    <event type="alternative splicing"/>
    <isoform>
        <id>Q9Y471-1</id>
        <name>1</name>
        <sequence type="displayed"/>
    </isoform>
    <isoform>
        <id>Q9Y471-4</id>
        <name>2</name>
        <sequence type="described" ref="VSP_057565 VSP_057566"/>
    </isoform>
</comment>
<comment type="tissue specificity">
    <text evidence="1 2">Widely expressed. Highly expressed in thymus. Not expressed in brain. May be expressed in adult stem cells (at protein level) (PubMed:19890979).</text>
</comment>
<comment type="similarity">
    <text evidence="6">Belongs to the CMP-Neu5Ac hydroxylase family.</text>
</comment>
<comment type="caution">
    <text evidence="1 7 8 9 10">An Alu-mediated mutation of this gene occured in a common ancestor of Homo sapiens and Homo sapiens neanderthalis, approximately 2.1-2.2 million years ago, before brain expansion. It is generally accepted that the product of this gene, if any, is catalytically inactive as suggested by the absence of CMP-Neu5Gc sialic acid in human, while it is abundantly expressed at the surface of many cells in other vertebrates. The gene is however, significantly transcribed and the product described here might be expressed in vivo (PubMed:19890979). The putative protein is N-terminally truncated compared to orthologs and lacks a region probably essential to the CMP-N-acetylneuraminate monooxygenase activity.</text>
</comment>
<comment type="sequence caution" evidence="6">
    <conflict type="erroneous translation">
        <sequence resource="EMBL-CDS" id="AAC68881"/>
    </conflict>
    <text>Wrong choice of CDS.</text>
</comment>
<sequence length="501" mass="58380">MDENNGLLLLELNPPNPWDLQPRSPEELAFGEVQITYLTHACMDLKLGDKRMVFDPWLIGPAFARGWWLLHEPPSDWLERLCQADLIYISHLHSDHLSYPTLKKLAGRRPDIPIYVGNTERPVFWNLNQSGVQLTNINVVPFGIWQQVDKNLRFMILMDGVHPEMDTCIIVEYKGHKILNIVDCTRPNGGRLPMKVALMMSDFAGGASGFPMTFSGGKFTEEWKAQFIKTERKKLLNYKARLVKNLQPRIYCPFAGYFVESHPSDKYIKETNTKNDPNELNNLIKKNSDVITWTPRPGATLDLGRMLKDRTDSKGIIEPPEGTKIYKDSWDFEPYLEILNAALGDEIFLHSSWIKEYFTWAGFKDYNLVVRMIETDEDFNPFPGGYDYLVDFLDLSFPKERPQREHPYEEIHSRVDVIRHVVKNGLLWDELYIGFQTRLQRDPDIYHHLFWNHFQIKLPLTPPNWKSFLMCCEQNGPVILQFSTERTNEPNRNKFSVENKA</sequence>
<gene>
    <name type="primary">CMAHP</name>
    <name type="synonym">CMAH</name>
</gene>
<accession>Q9Y471</accession>
<accession>C1K3L2</accession>
<accession>O95250</accession>
<accession>Q5TD41</accession>
<accession>Q5TD42</accession>
<accession>Q5TD43</accession>
<accession>Q5TD44</accession>
<accession>Q68DC3</accession>
<accession>Q9UEE7</accession>
<dbReference type="EMBL" id="AF074480">
    <property type="protein sequence ID" value="AAC68881.1"/>
    <property type="status" value="ALT_SEQ"/>
    <property type="molecule type" value="mRNA"/>
</dbReference>
<dbReference type="EMBL" id="FJ794466">
    <property type="protein sequence ID" value="ACN93797.1"/>
    <property type="molecule type" value="mRNA"/>
</dbReference>
<dbReference type="EMBL" id="AL133268">
    <property type="status" value="NOT_ANNOTATED_CDS"/>
    <property type="molecule type" value="Genomic_DNA"/>
</dbReference>
<dbReference type="EMBL" id="AB009668">
    <property type="protein sequence ID" value="BAA31198.1"/>
    <property type="molecule type" value="Genomic_DNA"/>
</dbReference>
<dbReference type="EMBL" id="D86324">
    <property type="protein sequence ID" value="BAA31160.1"/>
    <property type="molecule type" value="mRNA"/>
</dbReference>
<dbReference type="FunCoup" id="Q9Y471">
    <property type="interactions" value="261"/>
</dbReference>
<dbReference type="IntAct" id="Q9Y471">
    <property type="interactions" value="1"/>
</dbReference>
<dbReference type="iPTMnet" id="Q9Y471"/>
<dbReference type="PhosphoSitePlus" id="Q9Y471"/>
<dbReference type="BioMuta" id="HGNC:2098"/>
<dbReference type="DMDM" id="223590237"/>
<dbReference type="jPOST" id="Q9Y471"/>
<dbReference type="MassIVE" id="Q9Y471"/>
<dbReference type="PeptideAtlas" id="Q9Y471"/>
<dbReference type="AGR" id="HGNC:2098"/>
<dbReference type="GeneCards" id="CMAHP"/>
<dbReference type="HGNC" id="HGNC:2098">
    <property type="gene designation" value="CMAHP"/>
</dbReference>
<dbReference type="MIM" id="603209">
    <property type="type" value="gene"/>
</dbReference>
<dbReference type="neXtProt" id="NX_Q9Y471"/>
<dbReference type="InParanoid" id="Q9Y471"/>
<dbReference type="PAN-GO" id="Q9Y471">
    <property type="GO annotations" value="3 GO annotations based on evolutionary models"/>
</dbReference>
<dbReference type="PhylomeDB" id="Q9Y471"/>
<dbReference type="TreeFam" id="TF331273"/>
<dbReference type="BRENDA" id="1.14.18.2">
    <property type="organism ID" value="2681"/>
</dbReference>
<dbReference type="PathwayCommons" id="Q9Y471"/>
<dbReference type="ChiTaRS" id="CMAHP">
    <property type="organism name" value="human"/>
</dbReference>
<dbReference type="Pharos" id="Q9Y471">
    <property type="development level" value="Tdark"/>
</dbReference>
<dbReference type="PRO" id="PR:Q9Y471"/>
<dbReference type="Proteomes" id="UP000005640">
    <property type="component" value="Unplaced"/>
</dbReference>
<dbReference type="RNAct" id="Q9Y471">
    <property type="molecule type" value="protein"/>
</dbReference>
<dbReference type="GO" id="GO:0005737">
    <property type="term" value="C:cytoplasm"/>
    <property type="evidence" value="ECO:0000314"/>
    <property type="project" value="UniProtKB"/>
</dbReference>
<dbReference type="GO" id="GO:0005856">
    <property type="term" value="C:cytoskeleton"/>
    <property type="evidence" value="ECO:0000314"/>
    <property type="project" value="UniProtKB"/>
</dbReference>
<dbReference type="GO" id="GO:0016020">
    <property type="term" value="C:membrane"/>
    <property type="evidence" value="ECO:0000314"/>
    <property type="project" value="UniProtKB"/>
</dbReference>
<dbReference type="GO" id="GO:0005634">
    <property type="term" value="C:nucleus"/>
    <property type="evidence" value="ECO:0000314"/>
    <property type="project" value="UniProtKB"/>
</dbReference>
<dbReference type="GO" id="GO:0030338">
    <property type="term" value="F:CMP-N-acetylneuraminate monooxygenase activity"/>
    <property type="evidence" value="ECO:0000318"/>
    <property type="project" value="GO_Central"/>
</dbReference>
<dbReference type="GO" id="GO:0046381">
    <property type="term" value="P:CMP-N-acetylneuraminate metabolic process"/>
    <property type="evidence" value="ECO:0000318"/>
    <property type="project" value="GO_Central"/>
</dbReference>
<dbReference type="GO" id="GO:0030111">
    <property type="term" value="P:regulation of Wnt signaling pathway"/>
    <property type="evidence" value="ECO:0000315"/>
    <property type="project" value="UniProtKB"/>
</dbReference>
<dbReference type="FunFam" id="3.60.15.10:FF:000025">
    <property type="entry name" value="Inactive cytidine monophosphate-N-acetylneuraminic acid hydroxylase"/>
    <property type="match status" value="1"/>
</dbReference>
<dbReference type="Gene3D" id="3.60.15.10">
    <property type="entry name" value="Ribonuclease Z/Hydroxyacylglutathione hydrolase-like"/>
    <property type="match status" value="1"/>
</dbReference>
<dbReference type="InterPro" id="IPR027033">
    <property type="entry name" value="Cnh"/>
</dbReference>
<dbReference type="InterPro" id="IPR036866">
    <property type="entry name" value="RibonucZ/Hydroxyglut_hydro"/>
</dbReference>
<dbReference type="PANTHER" id="PTHR46522">
    <property type="entry name" value="CYTIDINE MONOPHOSPHATE-N-ACETYLNEURAMINIC ACID HYDROXYLASE"/>
    <property type="match status" value="1"/>
</dbReference>
<dbReference type="PANTHER" id="PTHR46522:SF1">
    <property type="entry name" value="INACTIVE CYTIDINE MONOPHOSPHATE-N-ACETYLNEURAMINIC ACID HYDROXYLASE"/>
    <property type="match status" value="1"/>
</dbReference>
<dbReference type="Pfam" id="PF13483">
    <property type="entry name" value="Lactamase_B_3"/>
    <property type="match status" value="1"/>
</dbReference>
<dbReference type="SUPFAM" id="SSF56281">
    <property type="entry name" value="Metallo-hydrolase/oxidoreductase"/>
    <property type="match status" value="1"/>
</dbReference>
<reference key="1">
    <citation type="journal article" date="1998" name="Proc. Natl. Acad. Sci. U.S.A.">
        <title>A mutation in human CMP-sialic acid hydroxylase occurred after the Homo-Pan divergence.</title>
        <authorList>
            <person name="Chou H.-H."/>
            <person name="Takematsu H."/>
            <person name="Diaz S."/>
            <person name="Iber J."/>
            <person name="Nickerson E."/>
            <person name="Wright K.L."/>
            <person name="Muchmore E.A."/>
            <person name="Nelson D.L."/>
            <person name="Warren S.T."/>
            <person name="Varki A."/>
        </authorList>
    </citation>
    <scope>NUCLEOTIDE SEQUENCE [MRNA] (ISOFORM 1)</scope>
    <scope>LACK OF ENZYME ACTIVITY</scope>
</reference>
<reference key="2">
    <citation type="journal article" date="2010" name="Stem Cells">
        <title>Human CMP-N-acetylneuraminic acid hydroxylase is a novel stem cell marker linked to stem cell-specific mechanisms.</title>
        <authorList>
            <person name="Nystedt J."/>
            <person name="Anderson H."/>
            <person name="Hirvonen T."/>
            <person name="Impola U."/>
            <person name="Jaatinen T."/>
            <person name="Heiskanen A."/>
            <person name="Blomqvist M."/>
            <person name="Satomaa T."/>
            <person name="Natunen J."/>
            <person name="Saarinen J."/>
            <person name="Lehenkari P."/>
            <person name="Valmu L."/>
            <person name="Laine J."/>
        </authorList>
    </citation>
    <scope>NUCLEOTIDE SEQUENCE [MRNA] (ISOFORM 1)</scope>
    <scope>FUNCTION</scope>
    <scope>LACK OF ENZYME ACTIVITY</scope>
    <scope>SUBCELLULAR LOCATION</scope>
    <scope>TISSUE SPECIFICITY</scope>
</reference>
<reference key="3">
    <citation type="journal article" date="2003" name="Nature">
        <title>The DNA sequence and analysis of human chromosome 6.</title>
        <authorList>
            <person name="Mungall A.J."/>
            <person name="Palmer S.A."/>
            <person name="Sims S.K."/>
            <person name="Edwards C.A."/>
            <person name="Ashurst J.L."/>
            <person name="Wilming L."/>
            <person name="Jones M.C."/>
            <person name="Horton R."/>
            <person name="Hunt S.E."/>
            <person name="Scott C.E."/>
            <person name="Gilbert J.G.R."/>
            <person name="Clamp M.E."/>
            <person name="Bethel G."/>
            <person name="Milne S."/>
            <person name="Ainscough R."/>
            <person name="Almeida J.P."/>
            <person name="Ambrose K.D."/>
            <person name="Andrews T.D."/>
            <person name="Ashwell R.I.S."/>
            <person name="Babbage A.K."/>
            <person name="Bagguley C.L."/>
            <person name="Bailey J."/>
            <person name="Banerjee R."/>
            <person name="Barker D.J."/>
            <person name="Barlow K.F."/>
            <person name="Bates K."/>
            <person name="Beare D.M."/>
            <person name="Beasley H."/>
            <person name="Beasley O."/>
            <person name="Bird C.P."/>
            <person name="Blakey S.E."/>
            <person name="Bray-Allen S."/>
            <person name="Brook J."/>
            <person name="Brown A.J."/>
            <person name="Brown J.Y."/>
            <person name="Burford D.C."/>
            <person name="Burrill W."/>
            <person name="Burton J."/>
            <person name="Carder C."/>
            <person name="Carter N.P."/>
            <person name="Chapman J.C."/>
            <person name="Clark S.Y."/>
            <person name="Clark G."/>
            <person name="Clee C.M."/>
            <person name="Clegg S."/>
            <person name="Cobley V."/>
            <person name="Collier R.E."/>
            <person name="Collins J.E."/>
            <person name="Colman L.K."/>
            <person name="Corby N.R."/>
            <person name="Coville G.J."/>
            <person name="Culley K.M."/>
            <person name="Dhami P."/>
            <person name="Davies J."/>
            <person name="Dunn M."/>
            <person name="Earthrowl M.E."/>
            <person name="Ellington A.E."/>
            <person name="Evans K.A."/>
            <person name="Faulkner L."/>
            <person name="Francis M.D."/>
            <person name="Frankish A."/>
            <person name="Frankland J."/>
            <person name="French L."/>
            <person name="Garner P."/>
            <person name="Garnett J."/>
            <person name="Ghori M.J."/>
            <person name="Gilby L.M."/>
            <person name="Gillson C.J."/>
            <person name="Glithero R.J."/>
            <person name="Grafham D.V."/>
            <person name="Grant M."/>
            <person name="Gribble S."/>
            <person name="Griffiths C."/>
            <person name="Griffiths M.N.D."/>
            <person name="Hall R."/>
            <person name="Halls K.S."/>
            <person name="Hammond S."/>
            <person name="Harley J.L."/>
            <person name="Hart E.A."/>
            <person name="Heath P.D."/>
            <person name="Heathcott R."/>
            <person name="Holmes S.J."/>
            <person name="Howden P.J."/>
            <person name="Howe K.L."/>
            <person name="Howell G.R."/>
            <person name="Huckle E."/>
            <person name="Humphray S.J."/>
            <person name="Humphries M.D."/>
            <person name="Hunt A.R."/>
            <person name="Johnson C.M."/>
            <person name="Joy A.A."/>
            <person name="Kay M."/>
            <person name="Keenan S.J."/>
            <person name="Kimberley A.M."/>
            <person name="King A."/>
            <person name="Laird G.K."/>
            <person name="Langford C."/>
            <person name="Lawlor S."/>
            <person name="Leongamornlert D.A."/>
            <person name="Leversha M."/>
            <person name="Lloyd C.R."/>
            <person name="Lloyd D.M."/>
            <person name="Loveland J.E."/>
            <person name="Lovell J."/>
            <person name="Martin S."/>
            <person name="Mashreghi-Mohammadi M."/>
            <person name="Maslen G.L."/>
            <person name="Matthews L."/>
            <person name="McCann O.T."/>
            <person name="McLaren S.J."/>
            <person name="McLay K."/>
            <person name="McMurray A."/>
            <person name="Moore M.J.F."/>
            <person name="Mullikin J.C."/>
            <person name="Niblett D."/>
            <person name="Nickerson T."/>
            <person name="Novik K.L."/>
            <person name="Oliver K."/>
            <person name="Overton-Larty E.K."/>
            <person name="Parker A."/>
            <person name="Patel R."/>
            <person name="Pearce A.V."/>
            <person name="Peck A.I."/>
            <person name="Phillimore B.J.C.T."/>
            <person name="Phillips S."/>
            <person name="Plumb R.W."/>
            <person name="Porter K.M."/>
            <person name="Ramsey Y."/>
            <person name="Ranby S.A."/>
            <person name="Rice C.M."/>
            <person name="Ross M.T."/>
            <person name="Searle S.M."/>
            <person name="Sehra H.K."/>
            <person name="Sheridan E."/>
            <person name="Skuce C.D."/>
            <person name="Smith S."/>
            <person name="Smith M."/>
            <person name="Spraggon L."/>
            <person name="Squares S.L."/>
            <person name="Steward C.A."/>
            <person name="Sycamore N."/>
            <person name="Tamlyn-Hall G."/>
            <person name="Tester J."/>
            <person name="Theaker A.J."/>
            <person name="Thomas D.W."/>
            <person name="Thorpe A."/>
            <person name="Tracey A."/>
            <person name="Tromans A."/>
            <person name="Tubby B."/>
            <person name="Wall M."/>
            <person name="Wallis J.M."/>
            <person name="West A.P."/>
            <person name="White S.S."/>
            <person name="Whitehead S.L."/>
            <person name="Whittaker H."/>
            <person name="Wild A."/>
            <person name="Willey D.J."/>
            <person name="Wilmer T.E."/>
            <person name="Wood J.M."/>
            <person name="Wray P.W."/>
            <person name="Wyatt J.C."/>
            <person name="Young L."/>
            <person name="Younger R.M."/>
            <person name="Bentley D.R."/>
            <person name="Coulson A."/>
            <person name="Durbin R.M."/>
            <person name="Hubbard T."/>
            <person name="Sulston J.E."/>
            <person name="Dunham I."/>
            <person name="Rogers J."/>
            <person name="Beck S."/>
        </authorList>
    </citation>
    <scope>NUCLEOTIDE SEQUENCE [LARGE SCALE GENOMIC DNA]</scope>
</reference>
<reference key="4">
    <citation type="journal article" date="1998" name="J. Biol. Chem.">
        <title>The molecular basis for the absence of N-glycolylneuraminic acid in humans.</title>
        <authorList>
            <person name="Irie A."/>
            <person name="Koyama S."/>
            <person name="Kozutsumi Y."/>
            <person name="Kawasaki T."/>
            <person name="Suzuki A."/>
        </authorList>
    </citation>
    <scope>NUCLEOTIDE SEQUENCE [GENOMIC DNA / MRNA] (ISOFORM 2)</scope>
    <scope>LACK OF ENZYME ACTIVITY</scope>
    <scope>TISSUE SPECIFICITY</scope>
</reference>
<reference key="5">
    <citation type="journal article" date="2001" name="Proc. Natl. Acad. Sci. U.S.A.">
        <title>Alu-mediated inactivation of the human CMP-N-acetylneuraminic acid hydroxylase gene.</title>
        <authorList>
            <person name="Hayakawa T."/>
            <person name="Satta Y."/>
            <person name="Gagneux P."/>
            <person name="Varki A."/>
            <person name="Takahata N."/>
        </authorList>
    </citation>
    <scope>ENZYME INACTIVATION</scope>
</reference>
<reference key="6">
    <citation type="journal article" date="2002" name="Proc. Natl. Acad. Sci. U.S.A.">
        <title>Inactivation of CMP-N-acetylneuraminic acid hydroxylase occurred prior to brain expansion during human evolution.</title>
        <authorList>
            <person name="Chou H.-H."/>
            <person name="Hayakawa T."/>
            <person name="Diaz S."/>
            <person name="Krings M."/>
            <person name="Indriati E."/>
            <person name="Leakey M."/>
            <person name="Paabo S."/>
            <person name="Satta Y."/>
            <person name="Takahata N."/>
            <person name="Varki A."/>
        </authorList>
    </citation>
    <scope>ENZYME INACTIVATION</scope>
</reference>
<evidence type="ECO:0000269" key="1">
    <source>
    </source>
</evidence>
<evidence type="ECO:0000269" key="2">
    <source>
    </source>
</evidence>
<evidence type="ECO:0000303" key="3">
    <source>
    </source>
</evidence>
<evidence type="ECO:0000303" key="4">
    <source>
    </source>
</evidence>
<evidence type="ECO:0000303" key="5">
    <source>
    </source>
</evidence>
<evidence type="ECO:0000305" key="6"/>
<evidence type="ECO:0000305" key="7">
    <source>
    </source>
</evidence>
<evidence type="ECO:0000305" key="8">
    <source>
    </source>
</evidence>
<evidence type="ECO:0000305" key="9">
    <source>
    </source>
</evidence>
<evidence type="ECO:0000305" key="10">
    <source>
    </source>
</evidence>
<proteinExistence type="evidence at protein level"/>
<protein>
    <recommendedName>
        <fullName evidence="10">Inactive cytidine monophosphate-N-acetylneuraminic acid hydroxylase</fullName>
        <shortName>CMP-NeuAc hydroxylase-like protein</shortName>
    </recommendedName>
    <alternativeName>
        <fullName>Cytidine monophosphate-N-acetylneuraminic acid hydroxylase pseudogene</fullName>
    </alternativeName>
</protein>
<name>CMAH_HUMAN</name>
<feature type="chain" id="PRO_0000127801" description="Inactive cytidine monophosphate-N-acetylneuraminic acid hydroxylase">
    <location>
        <begin position="1"/>
        <end position="501"/>
    </location>
</feature>
<feature type="splice variant" id="VSP_057565" description="In isoform 2.">
    <original>VILQFSTER</original>
    <variation>AILQECKTT</variation>
    <location>
        <begin position="478"/>
        <end position="486"/>
    </location>
</feature>
<feature type="splice variant" id="VSP_057566" description="In isoform 2.">
    <location>
        <begin position="487"/>
        <end position="501"/>
    </location>
</feature>
<feature type="sequence conflict" description="In Ref. 4; BAA31160." evidence="6" ref="4">
    <original>I</original>
    <variation>V</variation>
    <location>
        <position position="87"/>
    </location>
</feature>
<feature type="sequence conflict" description="In Ref. 4; BAA31160." evidence="6" ref="4">
    <original>I</original>
    <variation>T</variation>
    <location>
        <position position="181"/>
    </location>
</feature>
<feature type="sequence conflict" description="In Ref. 4; BAA31160." evidence="6" ref="4">
    <original>R</original>
    <variation>W</variation>
    <location>
        <position position="241"/>
    </location>
</feature>
<feature type="sequence conflict" description="In Ref. 4; BAA31160." evidence="6" ref="4">
    <original>R</original>
    <variation>P</variation>
    <location>
        <position position="310"/>
    </location>
</feature>
<feature type="sequence conflict" description="In Ref. 2; ACN93797 and 1; AAC68881." evidence="6" ref="2 1">
    <original>V</original>
    <variation>A</variation>
    <location>
        <position position="478"/>
    </location>
</feature>
<organism>
    <name type="scientific">Homo sapiens</name>
    <name type="common">Human</name>
    <dbReference type="NCBI Taxonomy" id="9606"/>
    <lineage>
        <taxon>Eukaryota</taxon>
        <taxon>Metazoa</taxon>
        <taxon>Chordata</taxon>
        <taxon>Craniata</taxon>
        <taxon>Vertebrata</taxon>
        <taxon>Euteleostomi</taxon>
        <taxon>Mammalia</taxon>
        <taxon>Eutheria</taxon>
        <taxon>Euarchontoglires</taxon>
        <taxon>Primates</taxon>
        <taxon>Haplorrhini</taxon>
        <taxon>Catarrhini</taxon>
        <taxon>Hominidae</taxon>
        <taxon>Homo</taxon>
    </lineage>
</organism>